<protein>
    <recommendedName>
        <fullName evidence="1">tRNA uridine 5-carboxymethylaminomethyl modification enzyme MnmG</fullName>
    </recommendedName>
    <alternativeName>
        <fullName evidence="1">Glucose-inhibited division protein A</fullName>
    </alternativeName>
</protein>
<feature type="chain" id="PRO_0000117116" description="tRNA uridine 5-carboxymethylaminomethyl modification enzyme MnmG">
    <location>
        <begin position="1"/>
        <end position="632"/>
    </location>
</feature>
<feature type="region of interest" description="Disordered" evidence="2">
    <location>
        <begin position="205"/>
        <end position="231"/>
    </location>
</feature>
<feature type="compositionally biased region" description="Basic and acidic residues" evidence="2">
    <location>
        <begin position="216"/>
        <end position="228"/>
    </location>
</feature>
<feature type="binding site" evidence="1">
    <location>
        <begin position="15"/>
        <end position="20"/>
    </location>
    <ligand>
        <name>FAD</name>
        <dbReference type="ChEBI" id="CHEBI:57692"/>
    </ligand>
</feature>
<feature type="binding site" evidence="1">
    <location>
        <begin position="276"/>
        <end position="290"/>
    </location>
    <ligand>
        <name>NAD(+)</name>
        <dbReference type="ChEBI" id="CHEBI:57540"/>
    </ligand>
</feature>
<name>MNMG_LACJO</name>
<dbReference type="EMBL" id="AE017198">
    <property type="protein sequence ID" value="AAS09798.1"/>
    <property type="molecule type" value="Genomic_DNA"/>
</dbReference>
<dbReference type="RefSeq" id="WP_004898266.1">
    <property type="nucleotide sequence ID" value="NC_005362.1"/>
</dbReference>
<dbReference type="SMR" id="Q74H95"/>
<dbReference type="KEGG" id="ljo:LJ_1854"/>
<dbReference type="eggNOG" id="COG0445">
    <property type="taxonomic scope" value="Bacteria"/>
</dbReference>
<dbReference type="HOGENOM" id="CLU_007831_2_2_9"/>
<dbReference type="Proteomes" id="UP000000581">
    <property type="component" value="Chromosome"/>
</dbReference>
<dbReference type="GO" id="GO:0005829">
    <property type="term" value="C:cytosol"/>
    <property type="evidence" value="ECO:0007669"/>
    <property type="project" value="TreeGrafter"/>
</dbReference>
<dbReference type="GO" id="GO:0050660">
    <property type="term" value="F:flavin adenine dinucleotide binding"/>
    <property type="evidence" value="ECO:0007669"/>
    <property type="project" value="UniProtKB-UniRule"/>
</dbReference>
<dbReference type="GO" id="GO:0030488">
    <property type="term" value="P:tRNA methylation"/>
    <property type="evidence" value="ECO:0007669"/>
    <property type="project" value="TreeGrafter"/>
</dbReference>
<dbReference type="GO" id="GO:0002098">
    <property type="term" value="P:tRNA wobble uridine modification"/>
    <property type="evidence" value="ECO:0007669"/>
    <property type="project" value="InterPro"/>
</dbReference>
<dbReference type="FunFam" id="1.10.10.1800:FF:000001">
    <property type="entry name" value="tRNA uridine 5-carboxymethylaminomethyl modification enzyme MnmG"/>
    <property type="match status" value="1"/>
</dbReference>
<dbReference type="FunFam" id="1.10.150.570:FF:000001">
    <property type="entry name" value="tRNA uridine 5-carboxymethylaminomethyl modification enzyme MnmG"/>
    <property type="match status" value="1"/>
</dbReference>
<dbReference type="FunFam" id="3.50.50.60:FF:000002">
    <property type="entry name" value="tRNA uridine 5-carboxymethylaminomethyl modification enzyme MnmG"/>
    <property type="match status" value="1"/>
</dbReference>
<dbReference type="FunFam" id="3.50.50.60:FF:000063">
    <property type="entry name" value="tRNA uridine 5-carboxymethylaminomethyl modification enzyme MnmG"/>
    <property type="match status" value="1"/>
</dbReference>
<dbReference type="Gene3D" id="3.50.50.60">
    <property type="entry name" value="FAD/NAD(P)-binding domain"/>
    <property type="match status" value="2"/>
</dbReference>
<dbReference type="Gene3D" id="1.10.150.570">
    <property type="entry name" value="GidA associated domain, C-terminal subdomain"/>
    <property type="match status" value="1"/>
</dbReference>
<dbReference type="Gene3D" id="1.10.10.1800">
    <property type="entry name" value="tRNA uridine 5-carboxymethylaminomethyl modification enzyme MnmG/GidA"/>
    <property type="match status" value="1"/>
</dbReference>
<dbReference type="HAMAP" id="MF_00129">
    <property type="entry name" value="MnmG_GidA"/>
    <property type="match status" value="1"/>
</dbReference>
<dbReference type="InterPro" id="IPR036188">
    <property type="entry name" value="FAD/NAD-bd_sf"/>
</dbReference>
<dbReference type="InterPro" id="IPR049312">
    <property type="entry name" value="GIDA_C_N"/>
</dbReference>
<dbReference type="InterPro" id="IPR004416">
    <property type="entry name" value="MnmG"/>
</dbReference>
<dbReference type="InterPro" id="IPR002218">
    <property type="entry name" value="MnmG-rel"/>
</dbReference>
<dbReference type="InterPro" id="IPR020595">
    <property type="entry name" value="MnmG-rel_CS"/>
</dbReference>
<dbReference type="InterPro" id="IPR026904">
    <property type="entry name" value="MnmG_C"/>
</dbReference>
<dbReference type="InterPro" id="IPR047001">
    <property type="entry name" value="MnmG_C_subdom"/>
</dbReference>
<dbReference type="InterPro" id="IPR044920">
    <property type="entry name" value="MnmG_C_subdom_sf"/>
</dbReference>
<dbReference type="InterPro" id="IPR040131">
    <property type="entry name" value="MnmG_N"/>
</dbReference>
<dbReference type="NCBIfam" id="TIGR00136">
    <property type="entry name" value="mnmG_gidA"/>
    <property type="match status" value="1"/>
</dbReference>
<dbReference type="PANTHER" id="PTHR11806">
    <property type="entry name" value="GLUCOSE INHIBITED DIVISION PROTEIN A"/>
    <property type="match status" value="1"/>
</dbReference>
<dbReference type="PANTHER" id="PTHR11806:SF0">
    <property type="entry name" value="PROTEIN MTO1 HOMOLOG, MITOCHONDRIAL"/>
    <property type="match status" value="1"/>
</dbReference>
<dbReference type="Pfam" id="PF01134">
    <property type="entry name" value="GIDA"/>
    <property type="match status" value="1"/>
</dbReference>
<dbReference type="Pfam" id="PF21680">
    <property type="entry name" value="GIDA_C_1st"/>
    <property type="match status" value="1"/>
</dbReference>
<dbReference type="Pfam" id="PF13932">
    <property type="entry name" value="SAM_GIDA_C"/>
    <property type="match status" value="1"/>
</dbReference>
<dbReference type="PRINTS" id="PR00368">
    <property type="entry name" value="FADPNR"/>
</dbReference>
<dbReference type="PRINTS" id="PR00411">
    <property type="entry name" value="PNDRDTASEI"/>
</dbReference>
<dbReference type="SMART" id="SM01228">
    <property type="entry name" value="GIDA_assoc_3"/>
    <property type="match status" value="1"/>
</dbReference>
<dbReference type="SUPFAM" id="SSF51905">
    <property type="entry name" value="FAD/NAD(P)-binding domain"/>
    <property type="match status" value="1"/>
</dbReference>
<dbReference type="PROSITE" id="PS01280">
    <property type="entry name" value="GIDA_1"/>
    <property type="match status" value="1"/>
</dbReference>
<dbReference type="PROSITE" id="PS01281">
    <property type="entry name" value="GIDA_2"/>
    <property type="match status" value="1"/>
</dbReference>
<keyword id="KW-0963">Cytoplasm</keyword>
<keyword id="KW-0274">FAD</keyword>
<keyword id="KW-0285">Flavoprotein</keyword>
<keyword id="KW-0520">NAD</keyword>
<keyword id="KW-0819">tRNA processing</keyword>
<comment type="function">
    <text evidence="1">NAD-binding protein involved in the addition of a carboxymethylaminomethyl (cmnm) group at the wobble position (U34) of certain tRNAs, forming tRNA-cmnm(5)s(2)U34.</text>
</comment>
<comment type="cofactor">
    <cofactor evidence="1">
        <name>FAD</name>
        <dbReference type="ChEBI" id="CHEBI:57692"/>
    </cofactor>
</comment>
<comment type="subunit">
    <text evidence="1">Homodimer. Heterotetramer of two MnmE and two MnmG subunits.</text>
</comment>
<comment type="subcellular location">
    <subcellularLocation>
        <location evidence="1">Cytoplasm</location>
    </subcellularLocation>
</comment>
<comment type="similarity">
    <text evidence="1">Belongs to the MnmG family.</text>
</comment>
<proteinExistence type="inferred from homology"/>
<gene>
    <name evidence="1" type="primary">mnmG</name>
    <name evidence="1" type="synonym">gidA</name>
    <name type="ordered locus">LJ_1854</name>
</gene>
<organism>
    <name type="scientific">Lactobacillus johnsonii (strain CNCM I-12250 / La1 / NCC 533)</name>
    <dbReference type="NCBI Taxonomy" id="257314"/>
    <lineage>
        <taxon>Bacteria</taxon>
        <taxon>Bacillati</taxon>
        <taxon>Bacillota</taxon>
        <taxon>Bacilli</taxon>
        <taxon>Lactobacillales</taxon>
        <taxon>Lactobacillaceae</taxon>
        <taxon>Lactobacillus</taxon>
    </lineage>
</organism>
<evidence type="ECO:0000255" key="1">
    <source>
        <dbReference type="HAMAP-Rule" id="MF_00129"/>
    </source>
</evidence>
<evidence type="ECO:0000256" key="2">
    <source>
        <dbReference type="SAM" id="MobiDB-lite"/>
    </source>
</evidence>
<sequence>MKTYESNEYDVIVVGAGHAGVEAALASARMGEKTLLLTINLDMVAFMPCNPSVGGPAKGTVVREIDALGGEMGKNIDATYIQMRMLNTGKGPAVRALRAQADKWQYHERMKDTIENEPNLTLRQAVADELIVEDGVCKGLITNTGAKYYAKSVVLTTGTAARGKIIIGELAYSSGPNNSLPSIKLPENLEKLGFKLRRFKTGTPPRVDGNTIDYSKTQEEPGDKEPRHFSYTSKDSDYLEDQMSCYMTYTNTVTHDIIRANLDRAPMFSGVIKGVGPRYCPSIEDKVVRFADKDRHQIFLEPEGRHTKEIYVGDFSTSMPEEVQLKMLHSVAGLEKAELMRPGYAIEYDVIEPWQLKHTLETKNIKHLFTAGQMNGTSGYEEAAGQGLIAGINAALSAQNKPGFTLQRDEAYIGVLIDDLVTKGTNEPYRLLTSRAEYRLLLRHDNADLRLTEKGHELGLISEDRYKEFQDKKQAISQAMEAIKKVTIHPTDEVQEYLASVKQDRLNAGVSGADFLKRPRVTFDAVERLSGETLATDRYVKEQVEIALKYEGYIKKEKTLVDRLHRLESKKIPVDIDYNAIPSLATEARQKFEKIRPESIAQAERISGVNPADLAILTAYIQQGRIAKVKNK</sequence>
<reference key="1">
    <citation type="journal article" date="2004" name="Proc. Natl. Acad. Sci. U.S.A.">
        <title>The genome sequence of the probiotic intestinal bacterium Lactobacillus johnsonii NCC 533.</title>
        <authorList>
            <person name="Pridmore R.D."/>
            <person name="Berger B."/>
            <person name="Desiere F."/>
            <person name="Vilanova D."/>
            <person name="Barretto C."/>
            <person name="Pittet A.-C."/>
            <person name="Zwahlen M.-C."/>
            <person name="Rouvet M."/>
            <person name="Altermann E."/>
            <person name="Barrangou R."/>
            <person name="Mollet B."/>
            <person name="Mercenier A."/>
            <person name="Klaenhammer T."/>
            <person name="Arigoni F."/>
            <person name="Schell M.A."/>
        </authorList>
    </citation>
    <scope>NUCLEOTIDE SEQUENCE [LARGE SCALE GENOMIC DNA]</scope>
    <source>
        <strain>CNCM I-1225 / La1 / NCC 533</strain>
    </source>
</reference>
<accession>Q74H95</accession>